<feature type="chain" id="PRO_0000088837" description="Protein kinase rad3">
    <location>
        <begin position="1"/>
        <end position="2386"/>
    </location>
</feature>
<feature type="domain" description="FAT" evidence="2">
    <location>
        <begin position="1386"/>
        <end position="1943"/>
    </location>
</feature>
<feature type="domain" description="PI3K/PI4K catalytic" evidence="1">
    <location>
        <begin position="2052"/>
        <end position="2370"/>
    </location>
</feature>
<feature type="domain" description="FATC" evidence="2 3">
    <location>
        <begin position="2354"/>
        <end position="2386"/>
    </location>
</feature>
<feature type="region of interest" description="G-loop" evidence="1">
    <location>
        <begin position="2058"/>
        <end position="2064"/>
    </location>
</feature>
<feature type="region of interest" description="Catalytic loop" evidence="1">
    <location>
        <begin position="2227"/>
        <end position="2235"/>
    </location>
</feature>
<feature type="region of interest" description="Activation loop" evidence="1">
    <location>
        <begin position="2247"/>
        <end position="2271"/>
    </location>
</feature>
<feature type="sequence conflict" description="In Ref. 1; CAA70297/AAC49607." evidence="7" ref="1">
    <original>T</original>
    <variation>S</variation>
    <location>
        <position position="198"/>
    </location>
</feature>
<feature type="sequence conflict" description="In Ref. 1; CAA70297/AAC49607." evidence="7" ref="1">
    <original>L</original>
    <variation>P</variation>
    <location>
        <position position="526"/>
    </location>
</feature>
<feature type="sequence conflict" description="In Ref. 3; CAA45106." evidence="7" ref="3">
    <original>SEC</original>
    <variation>LRM</variation>
    <location>
        <begin position="1779"/>
        <end position="1781"/>
    </location>
</feature>
<keyword id="KW-0067">ATP-binding</keyword>
<keyword id="KW-0227">DNA damage</keyword>
<keyword id="KW-0234">DNA repair</keyword>
<keyword id="KW-0237">DNA synthesis</keyword>
<keyword id="KW-0418">Kinase</keyword>
<keyword id="KW-0547">Nucleotide-binding</keyword>
<keyword id="KW-0539">Nucleus</keyword>
<keyword id="KW-1185">Reference proteome</keyword>
<keyword id="KW-0723">Serine/threonine-protein kinase</keyword>
<keyword id="KW-0808">Transferase</keyword>
<name>RAD3_SCHPO</name>
<accession>Q02099</accession>
<accession>Q92391</accession>
<accession>Q9UUM1</accession>
<sequence length="2386" mass="273529">MSQHAKRKAGSLDLSPRGLDDRQAFGQLLKEVLALDKEHELGRSNSLPSMTSELVEVLIEVGLLAFKHDDSKSEFISPKMLKEAHLSLQALMLILKRSPTVLREIKSSVTLLDWILPRTISLFADIRFIKLFDSLKEFHKLIYQLISEKSFLWDLYASFMRYWKYYITNVSSIVLQITNATFPYKMPSPNSQPLQSITPNYPTHREDKFDLLIINIEEACTFFFESAHFFAQCSYLKKSNFPSPPLFTAWTWIKPCFFNFVILLKRISIGDSQLFLHLHSRIVQTLCCFSLNFIYHGLPICEKSKHILMSSINLTLGSLKKTYTVANTAISLFFLSLFVLPKTVAGLFYPFGVSLLSDFKVLEQLEPDSDLKKAIILFKCRYQSSEIDQTTLRAFGEICTGKLENTLFSNSELNLFLLHYLSLDNDLSNILKVDFQNGHNICTFAKWCINNNLDEPSNLKHFREMLDYYSSHNVTISEDDLKNFSLVLCTHVAKVNEKTNSIFRTYEVHGCEVCNSFCLLFDERSLFKIPYHELFCALLKNPDIISSSVKQSLLLDGFFRWSQHCSNFNKESMLSLREFIMKALASTSRCLRVVAAKVLPIFIKGPNNLDIVEFHKESKALIFNTLKILAVENTAILETVILSWISLSRVVEEEELHFVLLEVISSVINSGIFYQGIGLSALQQIASTRHISVWQLLSPYWPTVSVAIVQGMGKKPNIASLFAQLMNISEGDFLIRTQAYTLPFLVLTKNKALIVRIAELSQSDVATLCLTNMHKILASLLTTDHPNLEESVMLLLSLATSDFEKVDLTSLLRSDPISITVELLQLYQNDVPHEKIENALRKVAMIVSQVVNDEDLSNKELLYDFFNNHILGILAEFSNILNDLKGKTSINEKIKTIVGIEKMLSLCGGAVKLGLPQILSNLQSAFQNEHLRFYAIKAWFSLILATKEPEYSSIAGLSLVILPPLFPYLEPQEAELVIQIFDFISSDTHKCLQGLKWAIPTSLDSACFSLKAKEIFCSLQNEDFYSELQSIIKCLTNENEPVCYLGLQKLELFFQAKVDELHDTLNLDISNEVLDQLLRCLLDCCVKYASTNMQISYLAAKNLGELGAIDPSRAKAQHIIKETVVLDNFENGEESLKFILDFMQSQLIPAFLVTTDTKAQGFLAYALQEFLKLGGFKSAVINKKKGLTVVTEHWMSLPDLSKRVLIPFLTSKYHLTPIPKIDIRYPIYKENVTIHTWMQLFSLKLMEYAHSQNAEKIFGICSKVVKDQEVNIPCFLLPFLVLNVILTESELEVNKVIEEFQLVINQPGPDGLNSVGQQRYTSFVDVFFKIVDYLNKWLRMRKKRNWDRRSAIARKENRYMSVEDATSRESSISKVESFLSRFPSKTLGIVSLNCGFHARALFYWEQHIRNATAPYAALESDYRVLQEIYAGIDDPDEIEAVSLNFHDYSFDQQLLLHENSGTWDSALSCYEIIIQKDPENKKAKIGLLNSMLQSGHYESLVLSLDSFIINDNHEYSKMLNLGIEASWRSLSIDSLKKCLSKSNLESFEAKLGSIFYQYLRKDSFAELTERLQPLYVDAATAIANTGAHSAYDCYDILSKLHAINDFSRIAETDGIVSDNLDIVLRRRLSQVAPYGKFKHQILSTHLVGYEKFENTKKTAEIYLEIARISRKNGQFQRAFNAILKAMDLDKPLATIEHAQWWWHQGQHRKAISELNFSLNNNMFDLVDEHEERPKNRKETLGNPLKGKVFLKLTKWLGKAGQLGLKDLETYYHKAVEIYSECENTHYYLGHHRVLMYEEEQKLPVNEQSERFLSGELVTRIINEFGRSLYYGTNHIYESMPKLLTLWLDFGAEELRLSKDDGEKYFREHIISSRKKSLELMNSNVCRLSMKIPQYFFLVALSQMISRVCHPNNKVYKILEHIIANVVASYPGETLWQLMATIKSTSQKRSLRGKSILNVLHSRKLSMSSKVDIKALSQSAILITEKLINLCNTRINSKSVKMSLKDHFRLSFDDPVDLVIPAKSFLDITLPAKDANRASHYPFPKTQPTLLKFEDEVDIMNSLQKPRKVYVRGTDGNLYPFLCKPKDDLRKDARLMEFNNLICKILRKDQEANRRNLCIRTYVVIPLNEECGFIEWVNHTRPFREILLKSYRQKNIPISYQEIKVDLDFALRSPNPGDIFEKKILPKFPPVFYEWFVESFPEPNNWVTSRQNYCRTLAVMSIVGYVLGLGDRHGENILFDEFTGEAIHVDFNCLFDKGLTFEKPEKVPFRLTHNMVDAMGPTGYEGGFRKASEITMRLLRSNQDTLMSVLESFLHDPLVEWNRKKSSSKYPNNEANEVLDIIRKKFQGFMPGETIPLSIEGQIQELIKSAVNPKNLVEMYIGWAAYF</sequence>
<reference key="1">
    <citation type="journal article" date="1996" name="EMBO J.">
        <title>The Schizosaccharomyces pombe rad3 checkpoint gene.</title>
        <authorList>
            <person name="Bentley N.J."/>
            <person name="Holtzman D.A."/>
            <person name="Flaggs G."/>
            <person name="Keegan K.S."/>
            <person name="DeMaggio A."/>
            <person name="Ford J.C."/>
            <person name="Hoekstra M."/>
            <person name="Carr A.M."/>
        </authorList>
    </citation>
    <scope>NUCLEOTIDE SEQUENCE [GENOMIC DNA]</scope>
    <scope>FUNCTION</scope>
    <source>
        <strain>972 / ATCC 24843</strain>
    </source>
</reference>
<reference key="2">
    <citation type="journal article" date="2002" name="Nature">
        <title>The genome sequence of Schizosaccharomyces pombe.</title>
        <authorList>
            <person name="Wood V."/>
            <person name="Gwilliam R."/>
            <person name="Rajandream M.A."/>
            <person name="Lyne M.H."/>
            <person name="Lyne R."/>
            <person name="Stewart A."/>
            <person name="Sgouros J.G."/>
            <person name="Peat N."/>
            <person name="Hayles J."/>
            <person name="Baker S.G."/>
            <person name="Basham D."/>
            <person name="Bowman S."/>
            <person name="Brooks K."/>
            <person name="Brown D."/>
            <person name="Brown S."/>
            <person name="Chillingworth T."/>
            <person name="Churcher C.M."/>
            <person name="Collins M."/>
            <person name="Connor R."/>
            <person name="Cronin A."/>
            <person name="Davis P."/>
            <person name="Feltwell T."/>
            <person name="Fraser A."/>
            <person name="Gentles S."/>
            <person name="Goble A."/>
            <person name="Hamlin N."/>
            <person name="Harris D.E."/>
            <person name="Hidalgo J."/>
            <person name="Hodgson G."/>
            <person name="Holroyd S."/>
            <person name="Hornsby T."/>
            <person name="Howarth S."/>
            <person name="Huckle E.J."/>
            <person name="Hunt S."/>
            <person name="Jagels K."/>
            <person name="James K.D."/>
            <person name="Jones L."/>
            <person name="Jones M."/>
            <person name="Leather S."/>
            <person name="McDonald S."/>
            <person name="McLean J."/>
            <person name="Mooney P."/>
            <person name="Moule S."/>
            <person name="Mungall K.L."/>
            <person name="Murphy L.D."/>
            <person name="Niblett D."/>
            <person name="Odell C."/>
            <person name="Oliver K."/>
            <person name="O'Neil S."/>
            <person name="Pearson D."/>
            <person name="Quail M.A."/>
            <person name="Rabbinowitsch E."/>
            <person name="Rutherford K.M."/>
            <person name="Rutter S."/>
            <person name="Saunders D."/>
            <person name="Seeger K."/>
            <person name="Sharp S."/>
            <person name="Skelton J."/>
            <person name="Simmonds M.N."/>
            <person name="Squares R."/>
            <person name="Squares S."/>
            <person name="Stevens K."/>
            <person name="Taylor K."/>
            <person name="Taylor R.G."/>
            <person name="Tivey A."/>
            <person name="Walsh S.V."/>
            <person name="Warren T."/>
            <person name="Whitehead S."/>
            <person name="Woodward J.R."/>
            <person name="Volckaert G."/>
            <person name="Aert R."/>
            <person name="Robben J."/>
            <person name="Grymonprez B."/>
            <person name="Weltjens I."/>
            <person name="Vanstreels E."/>
            <person name="Rieger M."/>
            <person name="Schaefer M."/>
            <person name="Mueller-Auer S."/>
            <person name="Gabel C."/>
            <person name="Fuchs M."/>
            <person name="Duesterhoeft A."/>
            <person name="Fritzc C."/>
            <person name="Holzer E."/>
            <person name="Moestl D."/>
            <person name="Hilbert H."/>
            <person name="Borzym K."/>
            <person name="Langer I."/>
            <person name="Beck A."/>
            <person name="Lehrach H."/>
            <person name="Reinhardt R."/>
            <person name="Pohl T.M."/>
            <person name="Eger P."/>
            <person name="Zimmermann W."/>
            <person name="Wedler H."/>
            <person name="Wambutt R."/>
            <person name="Purnelle B."/>
            <person name="Goffeau A."/>
            <person name="Cadieu E."/>
            <person name="Dreano S."/>
            <person name="Gloux S."/>
            <person name="Lelaure V."/>
            <person name="Mottier S."/>
            <person name="Galibert F."/>
            <person name="Aves S.J."/>
            <person name="Xiang Z."/>
            <person name="Hunt C."/>
            <person name="Moore K."/>
            <person name="Hurst S.M."/>
            <person name="Lucas M."/>
            <person name="Rochet M."/>
            <person name="Gaillardin C."/>
            <person name="Tallada V.A."/>
            <person name="Garzon A."/>
            <person name="Thode G."/>
            <person name="Daga R.R."/>
            <person name="Cruzado L."/>
            <person name="Jimenez J."/>
            <person name="Sanchez M."/>
            <person name="del Rey F."/>
            <person name="Benito J."/>
            <person name="Dominguez A."/>
            <person name="Revuelta J.L."/>
            <person name="Moreno S."/>
            <person name="Armstrong J."/>
            <person name="Forsburg S.L."/>
            <person name="Cerutti L."/>
            <person name="Lowe T."/>
            <person name="McCombie W.R."/>
            <person name="Paulsen I."/>
            <person name="Potashkin J."/>
            <person name="Shpakovski G.V."/>
            <person name="Ussery D."/>
            <person name="Barrell B.G."/>
            <person name="Nurse P."/>
        </authorList>
    </citation>
    <scope>NUCLEOTIDE SEQUENCE [LARGE SCALE GENOMIC DNA]</scope>
    <source>
        <strain>972 / ATCC 24843</strain>
    </source>
</reference>
<reference key="3">
    <citation type="journal article" date="1992" name="Gene">
        <title>Isolation and characterization of the Schizosaccharomyces pombe rad3 gene, involved in the DNA damage and DNA synthesis checkpoints.</title>
        <authorList>
            <person name="Seaton B.L."/>
            <person name="Yucel J."/>
            <person name="Sunnerhagen P."/>
            <person name="Subramani S."/>
        </authorList>
    </citation>
    <scope>NUCLEOTIDE SEQUENCE [GENOMIC DNA] OF 711-1781</scope>
    <scope>FUNCTION</scope>
</reference>
<reference key="4">
    <citation type="journal article" date="2004" name="EMBO J.">
        <title>Regulation of checkpoint kinases through dynamic interaction with Crb2.</title>
        <authorList>
            <person name="Mochida S."/>
            <person name="Esashi F."/>
            <person name="Aono N."/>
            <person name="Tamai K."/>
            <person name="O'Connell M.J."/>
            <person name="Yanagida M."/>
        </authorList>
    </citation>
    <scope>INTERACTION WITH CRB2 AND CHK1</scope>
</reference>
<organism>
    <name type="scientific">Schizosaccharomyces pombe (strain 972 / ATCC 24843)</name>
    <name type="common">Fission yeast</name>
    <dbReference type="NCBI Taxonomy" id="284812"/>
    <lineage>
        <taxon>Eukaryota</taxon>
        <taxon>Fungi</taxon>
        <taxon>Dikarya</taxon>
        <taxon>Ascomycota</taxon>
        <taxon>Taphrinomycotina</taxon>
        <taxon>Schizosaccharomycetes</taxon>
        <taxon>Schizosaccharomycetales</taxon>
        <taxon>Schizosaccharomycetaceae</taxon>
        <taxon>Schizosaccharomyces</taxon>
    </lineage>
</organism>
<protein>
    <recommendedName>
        <fullName>Protein kinase rad3</fullName>
        <ecNumber>2.7.11.1</ecNumber>
    </recommendedName>
    <alternativeName>
        <fullName>DNA repair protein rad3</fullName>
    </alternativeName>
</protein>
<gene>
    <name type="primary">rad3</name>
    <name type="ORF">SPBC216.05</name>
</gene>
<comment type="function">
    <text evidence="4 5 6">Serine/threonine kinase which activates checkpoint signaling upon genotoxic stresses. Involved in G2 arrest following DNA damage where it phosphorylates chk1 (PubMed:1398093, PubMed:8978690). Phosphorylation of 'Thr-73' and 'Ser-80' of checkpoint mediator crb2 promotes its interaction with chk1 (PubMed:14739927). It is also involved in the dependence of mitosis on the completion of DNA replication (PubMed:1398093).</text>
</comment>
<comment type="catalytic activity">
    <reaction>
        <text>L-seryl-[protein] + ATP = O-phospho-L-seryl-[protein] + ADP + H(+)</text>
        <dbReference type="Rhea" id="RHEA:17989"/>
        <dbReference type="Rhea" id="RHEA-COMP:9863"/>
        <dbReference type="Rhea" id="RHEA-COMP:11604"/>
        <dbReference type="ChEBI" id="CHEBI:15378"/>
        <dbReference type="ChEBI" id="CHEBI:29999"/>
        <dbReference type="ChEBI" id="CHEBI:30616"/>
        <dbReference type="ChEBI" id="CHEBI:83421"/>
        <dbReference type="ChEBI" id="CHEBI:456216"/>
        <dbReference type="EC" id="2.7.11.1"/>
    </reaction>
</comment>
<comment type="catalytic activity">
    <reaction>
        <text>L-threonyl-[protein] + ATP = O-phospho-L-threonyl-[protein] + ADP + H(+)</text>
        <dbReference type="Rhea" id="RHEA:46608"/>
        <dbReference type="Rhea" id="RHEA-COMP:11060"/>
        <dbReference type="Rhea" id="RHEA-COMP:11605"/>
        <dbReference type="ChEBI" id="CHEBI:15378"/>
        <dbReference type="ChEBI" id="CHEBI:30013"/>
        <dbReference type="ChEBI" id="CHEBI:30616"/>
        <dbReference type="ChEBI" id="CHEBI:61977"/>
        <dbReference type="ChEBI" id="CHEBI:456216"/>
        <dbReference type="EC" id="2.7.11.1"/>
    </reaction>
</comment>
<comment type="subunit">
    <text evidence="5">Interacts with crb2 (via BRCT domain). Interacts with chk1.</text>
</comment>
<comment type="interaction">
    <interactant intactId="EBI-768555">
        <id>Q02099</id>
    </interactant>
    <interactant intactId="EBI-768448">
        <id>P87074</id>
        <label>crb2</label>
    </interactant>
    <organismsDiffer>false</organismsDiffer>
    <experiments>3</experiments>
</comment>
<comment type="subcellular location">
    <subcellularLocation>
        <location>Nucleus</location>
    </subcellularLocation>
</comment>
<comment type="similarity">
    <text evidence="7">Belongs to the PI3/PI4-kinase family. ATM subfamily.</text>
</comment>
<evidence type="ECO:0000255" key="1">
    <source>
        <dbReference type="PROSITE-ProRule" id="PRU00269"/>
    </source>
</evidence>
<evidence type="ECO:0000255" key="2">
    <source>
        <dbReference type="PROSITE-ProRule" id="PRU00534"/>
    </source>
</evidence>
<evidence type="ECO:0000255" key="3">
    <source>
        <dbReference type="PROSITE-ProRule" id="PRU00535"/>
    </source>
</evidence>
<evidence type="ECO:0000269" key="4">
    <source>
    </source>
</evidence>
<evidence type="ECO:0000269" key="5">
    <source>
    </source>
</evidence>
<evidence type="ECO:0000269" key="6">
    <source>
    </source>
</evidence>
<evidence type="ECO:0000305" key="7"/>
<dbReference type="EC" id="2.7.11.1"/>
<dbReference type="EMBL" id="Y09076">
    <property type="protein sequence ID" value="CAA70297.1"/>
    <property type="molecule type" value="Genomic_DNA"/>
</dbReference>
<dbReference type="EMBL" id="U76307">
    <property type="protein sequence ID" value="AAC49607.1"/>
    <property type="molecule type" value="Genomic_DNA"/>
</dbReference>
<dbReference type="EMBL" id="CU329671">
    <property type="protein sequence ID" value="CAB40165.1"/>
    <property type="molecule type" value="Genomic_DNA"/>
</dbReference>
<dbReference type="EMBL" id="X63544">
    <property type="protein sequence ID" value="CAA45106.1"/>
    <property type="molecule type" value="Genomic_DNA"/>
</dbReference>
<dbReference type="PIR" id="T39911">
    <property type="entry name" value="T39911"/>
</dbReference>
<dbReference type="RefSeq" id="NP_595357.1">
    <property type="nucleotide sequence ID" value="NM_001021264.2"/>
</dbReference>
<dbReference type="SMR" id="Q02099"/>
<dbReference type="BioGRID" id="277242">
    <property type="interactions" value="140"/>
</dbReference>
<dbReference type="FunCoup" id="Q02099">
    <property type="interactions" value="730"/>
</dbReference>
<dbReference type="IntAct" id="Q02099">
    <property type="interactions" value="5"/>
</dbReference>
<dbReference type="STRING" id="284812.Q02099"/>
<dbReference type="iPTMnet" id="Q02099"/>
<dbReference type="PaxDb" id="4896-SPBC216.05.1"/>
<dbReference type="EnsemblFungi" id="SPBC216.05.1">
    <property type="protein sequence ID" value="SPBC216.05.1:pep"/>
    <property type="gene ID" value="SPBC216.05"/>
</dbReference>
<dbReference type="GeneID" id="2540719"/>
<dbReference type="KEGG" id="spo:2540719"/>
<dbReference type="PomBase" id="SPBC216.05">
    <property type="gene designation" value="rad3"/>
</dbReference>
<dbReference type="VEuPathDB" id="FungiDB:SPBC216.05"/>
<dbReference type="eggNOG" id="KOG0890">
    <property type="taxonomic scope" value="Eukaryota"/>
</dbReference>
<dbReference type="HOGENOM" id="CLU_000178_4_1_1"/>
<dbReference type="InParanoid" id="Q02099"/>
<dbReference type="OMA" id="SMYIGWC"/>
<dbReference type="PhylomeDB" id="Q02099"/>
<dbReference type="PRO" id="PR:Q02099"/>
<dbReference type="Proteomes" id="UP000002485">
    <property type="component" value="Chromosome II"/>
</dbReference>
<dbReference type="GO" id="GO:0070310">
    <property type="term" value="C:ATR-ATRIP complex"/>
    <property type="evidence" value="ECO:0000314"/>
    <property type="project" value="PomBase"/>
</dbReference>
<dbReference type="GO" id="GO:0000785">
    <property type="term" value="C:chromatin"/>
    <property type="evidence" value="ECO:0000314"/>
    <property type="project" value="PomBase"/>
</dbReference>
<dbReference type="GO" id="GO:0005694">
    <property type="term" value="C:chromosome"/>
    <property type="evidence" value="ECO:0000318"/>
    <property type="project" value="GO_Central"/>
</dbReference>
<dbReference type="GO" id="GO:0140445">
    <property type="term" value="C:chromosome, telomeric repeat region"/>
    <property type="evidence" value="ECO:0000314"/>
    <property type="project" value="PomBase"/>
</dbReference>
<dbReference type="GO" id="GO:0005829">
    <property type="term" value="C:cytosol"/>
    <property type="evidence" value="ECO:0007005"/>
    <property type="project" value="PomBase"/>
</dbReference>
<dbReference type="GO" id="GO:0000228">
    <property type="term" value="C:nuclear chromosome"/>
    <property type="evidence" value="ECO:0000314"/>
    <property type="project" value="PomBase"/>
</dbReference>
<dbReference type="GO" id="GO:0005730">
    <property type="term" value="C:nucleolus"/>
    <property type="evidence" value="ECO:0000314"/>
    <property type="project" value="PomBase"/>
</dbReference>
<dbReference type="GO" id="GO:0005634">
    <property type="term" value="C:nucleus"/>
    <property type="evidence" value="ECO:0000318"/>
    <property type="project" value="GO_Central"/>
</dbReference>
<dbReference type="GO" id="GO:0005524">
    <property type="term" value="F:ATP binding"/>
    <property type="evidence" value="ECO:0007669"/>
    <property type="project" value="UniProtKB-KW"/>
</dbReference>
<dbReference type="GO" id="GO:0140995">
    <property type="term" value="F:histone H2A kinase activity"/>
    <property type="evidence" value="ECO:0000269"/>
    <property type="project" value="PomBase"/>
</dbReference>
<dbReference type="GO" id="GO:0004672">
    <property type="term" value="F:protein kinase activity"/>
    <property type="evidence" value="ECO:0000314"/>
    <property type="project" value="PomBase"/>
</dbReference>
<dbReference type="GO" id="GO:0106310">
    <property type="term" value="F:protein serine kinase activity"/>
    <property type="evidence" value="ECO:0007669"/>
    <property type="project" value="RHEA"/>
</dbReference>
<dbReference type="GO" id="GO:0004674">
    <property type="term" value="F:protein serine/threonine kinase activity"/>
    <property type="evidence" value="ECO:0000314"/>
    <property type="project" value="PomBase"/>
</dbReference>
<dbReference type="GO" id="GO:0071897">
    <property type="term" value="P:DNA biosynthetic process"/>
    <property type="evidence" value="ECO:0007669"/>
    <property type="project" value="UniProtKB-KW"/>
</dbReference>
<dbReference type="GO" id="GO:0000077">
    <property type="term" value="P:DNA damage checkpoint signaling"/>
    <property type="evidence" value="ECO:0000318"/>
    <property type="project" value="GO_Central"/>
</dbReference>
<dbReference type="GO" id="GO:0006281">
    <property type="term" value="P:DNA repair"/>
    <property type="evidence" value="ECO:0000315"/>
    <property type="project" value="PomBase"/>
</dbReference>
<dbReference type="GO" id="GO:0033315">
    <property type="term" value="P:meiotic G2/MI DNA replication checkpoint signaling"/>
    <property type="evidence" value="ECO:0000315"/>
    <property type="project" value="PomBase"/>
</dbReference>
<dbReference type="GO" id="GO:0051598">
    <property type="term" value="P:meiotic recombination checkpoint signaling"/>
    <property type="evidence" value="ECO:0000315"/>
    <property type="project" value="PomBase"/>
</dbReference>
<dbReference type="GO" id="GO:0044773">
    <property type="term" value="P:mitotic DNA damage checkpoint signaling"/>
    <property type="evidence" value="ECO:0000269"/>
    <property type="project" value="PomBase"/>
</dbReference>
<dbReference type="GO" id="GO:0033314">
    <property type="term" value="P:mitotic DNA replication checkpoint signaling"/>
    <property type="evidence" value="ECO:0000315"/>
    <property type="project" value="PomBase"/>
</dbReference>
<dbReference type="GO" id="GO:0007095">
    <property type="term" value="P:mitotic G2 DNA damage checkpoint signaling"/>
    <property type="evidence" value="ECO:0000315"/>
    <property type="project" value="PomBase"/>
</dbReference>
<dbReference type="GO" id="GO:0031573">
    <property type="term" value="P:mitotic intra-S DNA damage checkpoint signaling"/>
    <property type="evidence" value="ECO:0000315"/>
    <property type="project" value="PomBase"/>
</dbReference>
<dbReference type="GO" id="GO:1904514">
    <property type="term" value="P:positive regulation of initiation of premeiotic DNA replication"/>
    <property type="evidence" value="ECO:0000315"/>
    <property type="project" value="PomBase"/>
</dbReference>
<dbReference type="GO" id="GO:0000723">
    <property type="term" value="P:telomere maintenance"/>
    <property type="evidence" value="ECO:0000315"/>
    <property type="project" value="PomBase"/>
</dbReference>
<dbReference type="CDD" id="cd00892">
    <property type="entry name" value="PIKKc_ATR"/>
    <property type="match status" value="1"/>
</dbReference>
<dbReference type="FunFam" id="1.10.1070.11:FF:000009">
    <property type="entry name" value="Putative serine/threonine-protein kinase ATR"/>
    <property type="match status" value="1"/>
</dbReference>
<dbReference type="Gene3D" id="1.10.1070.11">
    <property type="entry name" value="Phosphatidylinositol 3-/4-kinase, catalytic domain"/>
    <property type="match status" value="1"/>
</dbReference>
<dbReference type="Gene3D" id="3.30.1010.10">
    <property type="entry name" value="Phosphatidylinositol 3-kinase Catalytic Subunit, Chain A, domain 4"/>
    <property type="match status" value="1"/>
</dbReference>
<dbReference type="Gene3D" id="1.25.40.10">
    <property type="entry name" value="Tetratricopeptide repeat domain"/>
    <property type="match status" value="1"/>
</dbReference>
<dbReference type="InterPro" id="IPR056802">
    <property type="entry name" value="ATR-like_M-HEAT"/>
</dbReference>
<dbReference type="InterPro" id="IPR050517">
    <property type="entry name" value="DDR_Repair_Kinase"/>
</dbReference>
<dbReference type="InterPro" id="IPR003152">
    <property type="entry name" value="FATC_dom"/>
</dbReference>
<dbReference type="InterPro" id="IPR011009">
    <property type="entry name" value="Kinase-like_dom_sf"/>
</dbReference>
<dbReference type="InterPro" id="IPR000403">
    <property type="entry name" value="PI3/4_kinase_cat_dom"/>
</dbReference>
<dbReference type="InterPro" id="IPR036940">
    <property type="entry name" value="PI3/4_kinase_cat_sf"/>
</dbReference>
<dbReference type="InterPro" id="IPR018936">
    <property type="entry name" value="PI3/4_kinase_CS"/>
</dbReference>
<dbReference type="InterPro" id="IPR003151">
    <property type="entry name" value="PIK-rel_kinase_FAT"/>
</dbReference>
<dbReference type="InterPro" id="IPR014009">
    <property type="entry name" value="PIK_FAT"/>
</dbReference>
<dbReference type="InterPro" id="IPR011990">
    <property type="entry name" value="TPR-like_helical_dom_sf"/>
</dbReference>
<dbReference type="InterPro" id="IPR012993">
    <property type="entry name" value="UME"/>
</dbReference>
<dbReference type="PANTHER" id="PTHR11139">
    <property type="entry name" value="ATAXIA TELANGIECTASIA MUTATED ATM -RELATED"/>
    <property type="match status" value="1"/>
</dbReference>
<dbReference type="PANTHER" id="PTHR11139:SF125">
    <property type="entry name" value="SERINE_THREONINE-PROTEIN KINASE MEC1"/>
    <property type="match status" value="1"/>
</dbReference>
<dbReference type="Pfam" id="PF02259">
    <property type="entry name" value="FAT"/>
    <property type="match status" value="1"/>
</dbReference>
<dbReference type="Pfam" id="PF02260">
    <property type="entry name" value="FATC"/>
    <property type="match status" value="1"/>
</dbReference>
<dbReference type="Pfam" id="PF23593">
    <property type="entry name" value="HEAT_ATR"/>
    <property type="match status" value="1"/>
</dbReference>
<dbReference type="Pfam" id="PF25030">
    <property type="entry name" value="M-HEAT_ATR"/>
    <property type="match status" value="1"/>
</dbReference>
<dbReference type="Pfam" id="PF00454">
    <property type="entry name" value="PI3_PI4_kinase"/>
    <property type="match status" value="1"/>
</dbReference>
<dbReference type="Pfam" id="PF08064">
    <property type="entry name" value="UME"/>
    <property type="match status" value="1"/>
</dbReference>
<dbReference type="SMART" id="SM01343">
    <property type="entry name" value="FATC"/>
    <property type="match status" value="1"/>
</dbReference>
<dbReference type="SMART" id="SM00146">
    <property type="entry name" value="PI3Kc"/>
    <property type="match status" value="1"/>
</dbReference>
<dbReference type="SMART" id="SM00802">
    <property type="entry name" value="UME"/>
    <property type="match status" value="1"/>
</dbReference>
<dbReference type="SUPFAM" id="SSF56112">
    <property type="entry name" value="Protein kinase-like (PK-like)"/>
    <property type="match status" value="1"/>
</dbReference>
<dbReference type="SUPFAM" id="SSF48452">
    <property type="entry name" value="TPR-like"/>
    <property type="match status" value="1"/>
</dbReference>
<dbReference type="PROSITE" id="PS51189">
    <property type="entry name" value="FAT"/>
    <property type="match status" value="1"/>
</dbReference>
<dbReference type="PROSITE" id="PS51190">
    <property type="entry name" value="FATC"/>
    <property type="match status" value="1"/>
</dbReference>
<dbReference type="PROSITE" id="PS00916">
    <property type="entry name" value="PI3_4_KINASE_2"/>
    <property type="match status" value="1"/>
</dbReference>
<dbReference type="PROSITE" id="PS50290">
    <property type="entry name" value="PI3_4_KINASE_3"/>
    <property type="match status" value="1"/>
</dbReference>
<proteinExistence type="evidence at protein level"/>